<accession>B7KFJ9</accession>
<reference key="1">
    <citation type="journal article" date="2011" name="MBio">
        <title>Novel metabolic attributes of the genus Cyanothece, comprising a group of unicellular nitrogen-fixing Cyanobacteria.</title>
        <authorList>
            <person name="Bandyopadhyay A."/>
            <person name="Elvitigala T."/>
            <person name="Welsh E."/>
            <person name="Stockel J."/>
            <person name="Liberton M."/>
            <person name="Min H."/>
            <person name="Sherman L.A."/>
            <person name="Pakrasi H.B."/>
        </authorList>
    </citation>
    <scope>NUCLEOTIDE SEQUENCE [LARGE SCALE GENOMIC DNA]</scope>
    <source>
        <strain>PCC 7424</strain>
    </source>
</reference>
<protein>
    <recommendedName>
        <fullName evidence="1">Biotin synthase</fullName>
        <ecNumber evidence="1">2.8.1.6</ecNumber>
    </recommendedName>
</protein>
<dbReference type="EC" id="2.8.1.6" evidence="1"/>
<dbReference type="EMBL" id="CP001291">
    <property type="protein sequence ID" value="ACK73324.1"/>
    <property type="molecule type" value="Genomic_DNA"/>
</dbReference>
<dbReference type="RefSeq" id="WP_015956905.1">
    <property type="nucleotide sequence ID" value="NC_011729.1"/>
</dbReference>
<dbReference type="SMR" id="B7KFJ9"/>
<dbReference type="STRING" id="65393.PCC7424_4971"/>
<dbReference type="KEGG" id="cyc:PCC7424_4971"/>
<dbReference type="eggNOG" id="COG0502">
    <property type="taxonomic scope" value="Bacteria"/>
</dbReference>
<dbReference type="HOGENOM" id="CLU_033172_2_1_3"/>
<dbReference type="OrthoDB" id="9786826at2"/>
<dbReference type="UniPathway" id="UPA00078">
    <property type="reaction ID" value="UER00162"/>
</dbReference>
<dbReference type="Proteomes" id="UP000002384">
    <property type="component" value="Chromosome"/>
</dbReference>
<dbReference type="GO" id="GO:0051537">
    <property type="term" value="F:2 iron, 2 sulfur cluster binding"/>
    <property type="evidence" value="ECO:0007669"/>
    <property type="project" value="UniProtKB-KW"/>
</dbReference>
<dbReference type="GO" id="GO:0051539">
    <property type="term" value="F:4 iron, 4 sulfur cluster binding"/>
    <property type="evidence" value="ECO:0007669"/>
    <property type="project" value="UniProtKB-KW"/>
</dbReference>
<dbReference type="GO" id="GO:0004076">
    <property type="term" value="F:biotin synthase activity"/>
    <property type="evidence" value="ECO:0007669"/>
    <property type="project" value="UniProtKB-UniRule"/>
</dbReference>
<dbReference type="GO" id="GO:0005506">
    <property type="term" value="F:iron ion binding"/>
    <property type="evidence" value="ECO:0007669"/>
    <property type="project" value="UniProtKB-UniRule"/>
</dbReference>
<dbReference type="GO" id="GO:0009102">
    <property type="term" value="P:biotin biosynthetic process"/>
    <property type="evidence" value="ECO:0007669"/>
    <property type="project" value="UniProtKB-UniRule"/>
</dbReference>
<dbReference type="CDD" id="cd01335">
    <property type="entry name" value="Radical_SAM"/>
    <property type="match status" value="1"/>
</dbReference>
<dbReference type="FunFam" id="3.20.20.70:FF:000026">
    <property type="entry name" value="Biotin synthase"/>
    <property type="match status" value="1"/>
</dbReference>
<dbReference type="Gene3D" id="3.20.20.70">
    <property type="entry name" value="Aldolase class I"/>
    <property type="match status" value="1"/>
</dbReference>
<dbReference type="HAMAP" id="MF_01694">
    <property type="entry name" value="BioB"/>
    <property type="match status" value="1"/>
</dbReference>
<dbReference type="InterPro" id="IPR013785">
    <property type="entry name" value="Aldolase_TIM"/>
</dbReference>
<dbReference type="InterPro" id="IPR010722">
    <property type="entry name" value="BATS_dom"/>
</dbReference>
<dbReference type="InterPro" id="IPR002684">
    <property type="entry name" value="Biotin_synth/BioAB"/>
</dbReference>
<dbReference type="InterPro" id="IPR024177">
    <property type="entry name" value="Biotin_synthase"/>
</dbReference>
<dbReference type="InterPro" id="IPR006638">
    <property type="entry name" value="Elp3/MiaA/NifB-like_rSAM"/>
</dbReference>
<dbReference type="InterPro" id="IPR007197">
    <property type="entry name" value="rSAM"/>
</dbReference>
<dbReference type="NCBIfam" id="TIGR00433">
    <property type="entry name" value="bioB"/>
    <property type="match status" value="1"/>
</dbReference>
<dbReference type="PANTHER" id="PTHR22976">
    <property type="entry name" value="BIOTIN SYNTHASE"/>
    <property type="match status" value="1"/>
</dbReference>
<dbReference type="PANTHER" id="PTHR22976:SF2">
    <property type="entry name" value="BIOTIN SYNTHASE, MITOCHONDRIAL"/>
    <property type="match status" value="1"/>
</dbReference>
<dbReference type="Pfam" id="PF06968">
    <property type="entry name" value="BATS"/>
    <property type="match status" value="1"/>
</dbReference>
<dbReference type="Pfam" id="PF04055">
    <property type="entry name" value="Radical_SAM"/>
    <property type="match status" value="1"/>
</dbReference>
<dbReference type="PIRSF" id="PIRSF001619">
    <property type="entry name" value="Biotin_synth"/>
    <property type="match status" value="1"/>
</dbReference>
<dbReference type="SFLD" id="SFLDG01278">
    <property type="entry name" value="biotin_synthase_like"/>
    <property type="match status" value="1"/>
</dbReference>
<dbReference type="SFLD" id="SFLDS00029">
    <property type="entry name" value="Radical_SAM"/>
    <property type="match status" value="1"/>
</dbReference>
<dbReference type="SMART" id="SM00876">
    <property type="entry name" value="BATS"/>
    <property type="match status" value="1"/>
</dbReference>
<dbReference type="SMART" id="SM00729">
    <property type="entry name" value="Elp3"/>
    <property type="match status" value="1"/>
</dbReference>
<dbReference type="SUPFAM" id="SSF102114">
    <property type="entry name" value="Radical SAM enzymes"/>
    <property type="match status" value="1"/>
</dbReference>
<dbReference type="PROSITE" id="PS51918">
    <property type="entry name" value="RADICAL_SAM"/>
    <property type="match status" value="1"/>
</dbReference>
<comment type="function">
    <text evidence="1">Catalyzes the conversion of dethiobiotin (DTB) to biotin by the insertion of a sulfur atom into dethiobiotin via a radical-based mechanism.</text>
</comment>
<comment type="catalytic activity">
    <reaction evidence="1">
        <text>(4R,5S)-dethiobiotin + (sulfur carrier)-SH + 2 reduced [2Fe-2S]-[ferredoxin] + 2 S-adenosyl-L-methionine = (sulfur carrier)-H + biotin + 2 5'-deoxyadenosine + 2 L-methionine + 2 oxidized [2Fe-2S]-[ferredoxin]</text>
        <dbReference type="Rhea" id="RHEA:22060"/>
        <dbReference type="Rhea" id="RHEA-COMP:10000"/>
        <dbReference type="Rhea" id="RHEA-COMP:10001"/>
        <dbReference type="Rhea" id="RHEA-COMP:14737"/>
        <dbReference type="Rhea" id="RHEA-COMP:14739"/>
        <dbReference type="ChEBI" id="CHEBI:17319"/>
        <dbReference type="ChEBI" id="CHEBI:29917"/>
        <dbReference type="ChEBI" id="CHEBI:33737"/>
        <dbReference type="ChEBI" id="CHEBI:33738"/>
        <dbReference type="ChEBI" id="CHEBI:57586"/>
        <dbReference type="ChEBI" id="CHEBI:57844"/>
        <dbReference type="ChEBI" id="CHEBI:59789"/>
        <dbReference type="ChEBI" id="CHEBI:64428"/>
        <dbReference type="ChEBI" id="CHEBI:149473"/>
        <dbReference type="EC" id="2.8.1.6"/>
    </reaction>
</comment>
<comment type="cofactor">
    <cofactor evidence="1">
        <name>[4Fe-4S] cluster</name>
        <dbReference type="ChEBI" id="CHEBI:49883"/>
    </cofactor>
    <text evidence="1">Binds 1 [4Fe-4S] cluster. The cluster is coordinated with 3 cysteines and an exchangeable S-adenosyl-L-methionine.</text>
</comment>
<comment type="cofactor">
    <cofactor evidence="1">
        <name>[2Fe-2S] cluster</name>
        <dbReference type="ChEBI" id="CHEBI:190135"/>
    </cofactor>
    <text evidence="1">Binds 1 [2Fe-2S] cluster. The cluster is coordinated with 3 cysteines and 1 arginine.</text>
</comment>
<comment type="pathway">
    <text evidence="1">Cofactor biosynthesis; biotin biosynthesis; biotin from 7,8-diaminononanoate: step 2/2.</text>
</comment>
<comment type="subunit">
    <text evidence="1">Homodimer.</text>
</comment>
<comment type="similarity">
    <text evidence="1">Belongs to the radical SAM superfamily. Biotin synthase family.</text>
</comment>
<name>BIOB_GLOC7</name>
<organism>
    <name type="scientific">Gloeothece citriformis (strain PCC 7424)</name>
    <name type="common">Cyanothece sp. (strain PCC 7424)</name>
    <dbReference type="NCBI Taxonomy" id="65393"/>
    <lineage>
        <taxon>Bacteria</taxon>
        <taxon>Bacillati</taxon>
        <taxon>Cyanobacteriota</taxon>
        <taxon>Cyanophyceae</taxon>
        <taxon>Oscillatoriophycideae</taxon>
        <taxon>Chroococcales</taxon>
        <taxon>Aphanothecaceae</taxon>
        <taxon>Gloeothece</taxon>
        <taxon>Gloeothece citriformis</taxon>
    </lineage>
</organism>
<keyword id="KW-0001">2Fe-2S</keyword>
<keyword id="KW-0004">4Fe-4S</keyword>
<keyword id="KW-0093">Biotin biosynthesis</keyword>
<keyword id="KW-0408">Iron</keyword>
<keyword id="KW-0411">Iron-sulfur</keyword>
<keyword id="KW-0479">Metal-binding</keyword>
<keyword id="KW-1185">Reference proteome</keyword>
<keyword id="KW-0949">S-adenosyl-L-methionine</keyword>
<keyword id="KW-0808">Transferase</keyword>
<proteinExistence type="inferred from homology"/>
<evidence type="ECO:0000255" key="1">
    <source>
        <dbReference type="HAMAP-Rule" id="MF_01694"/>
    </source>
</evidence>
<evidence type="ECO:0000255" key="2">
    <source>
        <dbReference type="PROSITE-ProRule" id="PRU01266"/>
    </source>
</evidence>
<sequence>MVQASLSSPITPPKDTQALQEWLHQLADRIISGYRITKVEALALTEIEGQDQILLLCEAADRIRQACCGNRVDLCSIINIKSGHCSENCSFCSQSVHHPGQDSPVYGLKTSEEIVQQAKAAAAAGAKRFCLVSQGRGLKYNSPKSKEFAEILATVKRITTEAKIKPCCALGELTLEQAQALKEAGVTRYNHNLEASATFYPQIVTTHTWADRVETVKNLKAAGIQACTGGIIGMGESWEDRIDLALSLRDLEVDSVPINLLNPRQGTPLGHLPKLDPFEALQAIAIFRFILPQQILRYAGGREAIMGELQSLGLKAGINAMLIGHYLTTLGQSPQQDQAMLKSLGLEGGEAPIPGEYQP</sequence>
<feature type="chain" id="PRO_0000381339" description="Biotin synthase">
    <location>
        <begin position="1"/>
        <end position="359"/>
    </location>
</feature>
<feature type="domain" description="Radical SAM core" evidence="2">
    <location>
        <begin position="67"/>
        <end position="302"/>
    </location>
</feature>
<feature type="binding site" evidence="1">
    <location>
        <position position="85"/>
    </location>
    <ligand>
        <name>[4Fe-4S] cluster</name>
        <dbReference type="ChEBI" id="CHEBI:49883"/>
        <note>4Fe-4S-S-AdoMet</note>
    </ligand>
</feature>
<feature type="binding site" evidence="1">
    <location>
        <position position="89"/>
    </location>
    <ligand>
        <name>[4Fe-4S] cluster</name>
        <dbReference type="ChEBI" id="CHEBI:49883"/>
        <note>4Fe-4S-S-AdoMet</note>
    </ligand>
</feature>
<feature type="binding site" evidence="1">
    <location>
        <position position="92"/>
    </location>
    <ligand>
        <name>[4Fe-4S] cluster</name>
        <dbReference type="ChEBI" id="CHEBI:49883"/>
        <note>4Fe-4S-S-AdoMet</note>
    </ligand>
</feature>
<feature type="binding site" evidence="1">
    <location>
        <position position="130"/>
    </location>
    <ligand>
        <name>[2Fe-2S] cluster</name>
        <dbReference type="ChEBI" id="CHEBI:190135"/>
    </ligand>
</feature>
<feature type="binding site" evidence="1">
    <location>
        <position position="167"/>
    </location>
    <ligand>
        <name>[2Fe-2S] cluster</name>
        <dbReference type="ChEBI" id="CHEBI:190135"/>
    </ligand>
</feature>
<feature type="binding site" evidence="1">
    <location>
        <position position="227"/>
    </location>
    <ligand>
        <name>[2Fe-2S] cluster</name>
        <dbReference type="ChEBI" id="CHEBI:190135"/>
    </ligand>
</feature>
<feature type="binding site" evidence="1">
    <location>
        <position position="297"/>
    </location>
    <ligand>
        <name>[2Fe-2S] cluster</name>
        <dbReference type="ChEBI" id="CHEBI:190135"/>
    </ligand>
</feature>
<gene>
    <name evidence="1" type="primary">bioB</name>
    <name type="ordered locus">PCC7424_4971</name>
</gene>